<evidence type="ECO:0000255" key="1">
    <source>
        <dbReference type="HAMAP-Rule" id="MF_00599"/>
    </source>
</evidence>
<sequence>MRLFILSLFALLVMFQYDFWFGKNGYLDYQDIKAEIIQRKQENKKLSQRNQTIFAEIQDLKNGIEAIEERARMEHEMIKQNEVFYRIVKNKNR</sequence>
<name>FTSB_HISS1</name>
<comment type="function">
    <text evidence="1">Essential cell division protein. May link together the upstream cell division proteins, which are predominantly cytoplasmic, with the downstream cell division proteins, which are predominantly periplasmic.</text>
</comment>
<comment type="subunit">
    <text evidence="1">Part of a complex composed of FtsB, FtsL and FtsQ.</text>
</comment>
<comment type="subcellular location">
    <subcellularLocation>
        <location evidence="1">Cell inner membrane</location>
        <topology evidence="1">Single-pass type II membrane protein</topology>
    </subcellularLocation>
    <text evidence="1">Localizes to the division septum.</text>
</comment>
<comment type="similarity">
    <text evidence="1">Belongs to the FtsB family.</text>
</comment>
<accession>Q0I5I2</accession>
<gene>
    <name evidence="1" type="primary">ftsB</name>
    <name type="ordered locus">HS_1495</name>
</gene>
<proteinExistence type="inferred from homology"/>
<organism>
    <name type="scientific">Histophilus somni (strain 129Pt)</name>
    <name type="common">Haemophilus somnus</name>
    <dbReference type="NCBI Taxonomy" id="205914"/>
    <lineage>
        <taxon>Bacteria</taxon>
        <taxon>Pseudomonadati</taxon>
        <taxon>Pseudomonadota</taxon>
        <taxon>Gammaproteobacteria</taxon>
        <taxon>Pasteurellales</taxon>
        <taxon>Pasteurellaceae</taxon>
        <taxon>Histophilus</taxon>
    </lineage>
</organism>
<feature type="chain" id="PRO_1000025704" description="Cell division protein FtsB">
    <location>
        <begin position="1"/>
        <end position="93"/>
    </location>
</feature>
<feature type="topological domain" description="Cytoplasmic" evidence="1">
    <location>
        <begin position="1"/>
        <end position="3"/>
    </location>
</feature>
<feature type="transmembrane region" description="Helical" evidence="1">
    <location>
        <begin position="4"/>
        <end position="21"/>
    </location>
</feature>
<feature type="topological domain" description="Periplasmic" evidence="1">
    <location>
        <begin position="22"/>
        <end position="93"/>
    </location>
</feature>
<feature type="coiled-coil region" evidence="1">
    <location>
        <begin position="28"/>
        <end position="76"/>
    </location>
</feature>
<keyword id="KW-0131">Cell cycle</keyword>
<keyword id="KW-0132">Cell division</keyword>
<keyword id="KW-0997">Cell inner membrane</keyword>
<keyword id="KW-1003">Cell membrane</keyword>
<keyword id="KW-0175">Coiled coil</keyword>
<keyword id="KW-0472">Membrane</keyword>
<keyword id="KW-0812">Transmembrane</keyword>
<keyword id="KW-1133">Transmembrane helix</keyword>
<reference key="1">
    <citation type="journal article" date="2007" name="J. Bacteriol.">
        <title>Complete genome sequence of Haemophilus somnus (Histophilus somni) strain 129Pt and comparison to Haemophilus ducreyi 35000HP and Haemophilus influenzae Rd.</title>
        <authorList>
            <person name="Challacombe J.F."/>
            <person name="Duncan A.J."/>
            <person name="Brettin T.S."/>
            <person name="Bruce D."/>
            <person name="Chertkov O."/>
            <person name="Detter J.C."/>
            <person name="Han C.S."/>
            <person name="Misra M."/>
            <person name="Richardson P."/>
            <person name="Tapia R."/>
            <person name="Thayer N."/>
            <person name="Xie G."/>
            <person name="Inzana T.J."/>
        </authorList>
    </citation>
    <scope>NUCLEOTIDE SEQUENCE [LARGE SCALE GENOMIC DNA]</scope>
    <source>
        <strain>129Pt</strain>
    </source>
</reference>
<dbReference type="EMBL" id="CP000436">
    <property type="protein sequence ID" value="ABI25768.1"/>
    <property type="molecule type" value="Genomic_DNA"/>
</dbReference>
<dbReference type="SMR" id="Q0I5I2"/>
<dbReference type="KEGG" id="hso:HS_1495"/>
<dbReference type="eggNOG" id="COG2919">
    <property type="taxonomic scope" value="Bacteria"/>
</dbReference>
<dbReference type="HOGENOM" id="CLU_134863_5_2_6"/>
<dbReference type="GO" id="GO:0032153">
    <property type="term" value="C:cell division site"/>
    <property type="evidence" value="ECO:0007669"/>
    <property type="project" value="UniProtKB-UniRule"/>
</dbReference>
<dbReference type="GO" id="GO:0030428">
    <property type="term" value="C:cell septum"/>
    <property type="evidence" value="ECO:0007669"/>
    <property type="project" value="TreeGrafter"/>
</dbReference>
<dbReference type="GO" id="GO:0005886">
    <property type="term" value="C:plasma membrane"/>
    <property type="evidence" value="ECO:0007669"/>
    <property type="project" value="UniProtKB-SubCell"/>
</dbReference>
<dbReference type="GO" id="GO:0043093">
    <property type="term" value="P:FtsZ-dependent cytokinesis"/>
    <property type="evidence" value="ECO:0007669"/>
    <property type="project" value="UniProtKB-UniRule"/>
</dbReference>
<dbReference type="HAMAP" id="MF_00599">
    <property type="entry name" value="FtsB"/>
    <property type="match status" value="1"/>
</dbReference>
<dbReference type="InterPro" id="IPR023081">
    <property type="entry name" value="Cell_div_FtsB"/>
</dbReference>
<dbReference type="InterPro" id="IPR007060">
    <property type="entry name" value="FtsL/DivIC"/>
</dbReference>
<dbReference type="NCBIfam" id="NF002058">
    <property type="entry name" value="PRK00888.1"/>
    <property type="match status" value="1"/>
</dbReference>
<dbReference type="PANTHER" id="PTHR37485">
    <property type="entry name" value="CELL DIVISION PROTEIN FTSB"/>
    <property type="match status" value="1"/>
</dbReference>
<dbReference type="PANTHER" id="PTHR37485:SF1">
    <property type="entry name" value="CELL DIVISION PROTEIN FTSB"/>
    <property type="match status" value="1"/>
</dbReference>
<dbReference type="Pfam" id="PF04977">
    <property type="entry name" value="DivIC"/>
    <property type="match status" value="1"/>
</dbReference>
<protein>
    <recommendedName>
        <fullName evidence="1">Cell division protein FtsB</fullName>
    </recommendedName>
</protein>